<protein>
    <recommendedName>
        <fullName evidence="1">Small ribosomal subunit protein uS11</fullName>
    </recommendedName>
    <alternativeName>
        <fullName evidence="3">30S ribosomal protein S11</fullName>
    </alternativeName>
</protein>
<reference key="1">
    <citation type="journal article" date="2004" name="J. Bacteriol.">
        <title>Complete genome sequence of the genetically tractable hydrogenotrophic methanogen Methanococcus maripaludis.</title>
        <authorList>
            <person name="Hendrickson E.L."/>
            <person name="Kaul R."/>
            <person name="Zhou Y."/>
            <person name="Bovee D."/>
            <person name="Chapman P."/>
            <person name="Chung J."/>
            <person name="Conway de Macario E."/>
            <person name="Dodsworth J.A."/>
            <person name="Gillett W."/>
            <person name="Graham D.E."/>
            <person name="Hackett M."/>
            <person name="Haydock A.K."/>
            <person name="Kang A."/>
            <person name="Land M.L."/>
            <person name="Levy R."/>
            <person name="Lie T.J."/>
            <person name="Major T.A."/>
            <person name="Moore B.C."/>
            <person name="Porat I."/>
            <person name="Palmeiri A."/>
            <person name="Rouse G."/>
            <person name="Saenphimmachak C."/>
            <person name="Soell D."/>
            <person name="Van Dien S."/>
            <person name="Wang T."/>
            <person name="Whitman W.B."/>
            <person name="Xia Q."/>
            <person name="Zhang Y."/>
            <person name="Larimer F.W."/>
            <person name="Olson M.V."/>
            <person name="Leigh J.A."/>
        </authorList>
    </citation>
    <scope>NUCLEOTIDE SEQUENCE [LARGE SCALE GENOMIC DNA]</scope>
    <source>
        <strain>DSM 14266 / JCM 13030 / NBRC 101832 / S2 / LL</strain>
    </source>
</reference>
<comment type="function">
    <text evidence="1">Located on the platform of the 30S subunit.</text>
</comment>
<comment type="subunit">
    <text evidence="1">Part of the 30S ribosomal subunit.</text>
</comment>
<comment type="similarity">
    <text evidence="1">Belongs to the universal ribosomal protein uS11 family.</text>
</comment>
<gene>
    <name evidence="1" type="primary">rps11</name>
    <name type="ordered locus">MMP1321</name>
</gene>
<organism>
    <name type="scientific">Methanococcus maripaludis (strain DSM 14266 / JCM 13030 / NBRC 101832 / S2 / LL)</name>
    <dbReference type="NCBI Taxonomy" id="267377"/>
    <lineage>
        <taxon>Archaea</taxon>
        <taxon>Methanobacteriati</taxon>
        <taxon>Methanobacteriota</taxon>
        <taxon>Methanomada group</taxon>
        <taxon>Methanococci</taxon>
        <taxon>Methanococcales</taxon>
        <taxon>Methanococcaceae</taxon>
        <taxon>Methanococcus</taxon>
    </lineage>
</organism>
<dbReference type="EMBL" id="BX950229">
    <property type="protein sequence ID" value="CAF30877.1"/>
    <property type="molecule type" value="Genomic_DNA"/>
</dbReference>
<dbReference type="RefSeq" id="WP_011171265.1">
    <property type="nucleotide sequence ID" value="NC_005791.1"/>
</dbReference>
<dbReference type="SMR" id="Q6LXM9"/>
<dbReference type="STRING" id="267377.MMP1321"/>
<dbReference type="EnsemblBacteria" id="CAF30877">
    <property type="protein sequence ID" value="CAF30877"/>
    <property type="gene ID" value="MMP1321"/>
</dbReference>
<dbReference type="KEGG" id="mmp:MMP1321"/>
<dbReference type="PATRIC" id="fig|267377.15.peg.1356"/>
<dbReference type="eggNOG" id="arCOG04240">
    <property type="taxonomic scope" value="Archaea"/>
</dbReference>
<dbReference type="HOGENOM" id="CLU_072439_6_1_2"/>
<dbReference type="OrthoDB" id="12054at2157"/>
<dbReference type="Proteomes" id="UP000000590">
    <property type="component" value="Chromosome"/>
</dbReference>
<dbReference type="GO" id="GO:1990904">
    <property type="term" value="C:ribonucleoprotein complex"/>
    <property type="evidence" value="ECO:0007669"/>
    <property type="project" value="UniProtKB-KW"/>
</dbReference>
<dbReference type="GO" id="GO:0005840">
    <property type="term" value="C:ribosome"/>
    <property type="evidence" value="ECO:0007669"/>
    <property type="project" value="UniProtKB-KW"/>
</dbReference>
<dbReference type="GO" id="GO:0019843">
    <property type="term" value="F:rRNA binding"/>
    <property type="evidence" value="ECO:0007669"/>
    <property type="project" value="UniProtKB-UniRule"/>
</dbReference>
<dbReference type="GO" id="GO:0003735">
    <property type="term" value="F:structural constituent of ribosome"/>
    <property type="evidence" value="ECO:0007669"/>
    <property type="project" value="InterPro"/>
</dbReference>
<dbReference type="GO" id="GO:0006412">
    <property type="term" value="P:translation"/>
    <property type="evidence" value="ECO:0007669"/>
    <property type="project" value="UniProtKB-UniRule"/>
</dbReference>
<dbReference type="FunFam" id="3.30.420.80:FF:000007">
    <property type="entry name" value="30S ribosomal protein S11"/>
    <property type="match status" value="1"/>
</dbReference>
<dbReference type="Gene3D" id="3.30.420.80">
    <property type="entry name" value="Ribosomal protein S11"/>
    <property type="match status" value="1"/>
</dbReference>
<dbReference type="HAMAP" id="MF_01310">
    <property type="entry name" value="Ribosomal_uS11"/>
    <property type="match status" value="1"/>
</dbReference>
<dbReference type="InterPro" id="IPR001971">
    <property type="entry name" value="Ribosomal_uS11"/>
</dbReference>
<dbReference type="InterPro" id="IPR019961">
    <property type="entry name" value="Ribosomal_uS11_archaeal"/>
</dbReference>
<dbReference type="InterPro" id="IPR018102">
    <property type="entry name" value="Ribosomal_uS11_CS"/>
</dbReference>
<dbReference type="InterPro" id="IPR036967">
    <property type="entry name" value="Ribosomal_uS11_sf"/>
</dbReference>
<dbReference type="NCBIfam" id="TIGR03628">
    <property type="entry name" value="arch_S11P"/>
    <property type="match status" value="1"/>
</dbReference>
<dbReference type="NCBIfam" id="NF007176">
    <property type="entry name" value="PRK09607.1"/>
    <property type="match status" value="1"/>
</dbReference>
<dbReference type="PANTHER" id="PTHR11759">
    <property type="entry name" value="40S RIBOSOMAL PROTEIN S14/30S RIBOSOMAL PROTEIN S11"/>
    <property type="match status" value="1"/>
</dbReference>
<dbReference type="Pfam" id="PF00411">
    <property type="entry name" value="Ribosomal_S11"/>
    <property type="match status" value="1"/>
</dbReference>
<dbReference type="PIRSF" id="PIRSF002131">
    <property type="entry name" value="Ribosomal_S11"/>
    <property type="match status" value="1"/>
</dbReference>
<dbReference type="SUPFAM" id="SSF53137">
    <property type="entry name" value="Translational machinery components"/>
    <property type="match status" value="1"/>
</dbReference>
<dbReference type="PROSITE" id="PS00054">
    <property type="entry name" value="RIBOSOMAL_S11"/>
    <property type="match status" value="1"/>
</dbReference>
<evidence type="ECO:0000255" key="1">
    <source>
        <dbReference type="HAMAP-Rule" id="MF_01310"/>
    </source>
</evidence>
<evidence type="ECO:0000256" key="2">
    <source>
        <dbReference type="SAM" id="MobiDB-lite"/>
    </source>
</evidence>
<evidence type="ECO:0000305" key="3"/>
<proteinExistence type="inferred from homology"/>
<accession>Q6LXM9</accession>
<name>RS11_METMP</name>
<sequence length="124" mass="13418">MSQKWGLVHIYASYNNTILHVTDLTGAETIAKVSGGMIVRNQRDESSPYAAMQAAFKIADLMRDKGIDQVHVKVRATGGQKSKNPGPGAQAAIRALSRAGIRIGRIEDATPIPHDGTTPKRKNR</sequence>
<keyword id="KW-1185">Reference proteome</keyword>
<keyword id="KW-0687">Ribonucleoprotein</keyword>
<keyword id="KW-0689">Ribosomal protein</keyword>
<keyword id="KW-0694">RNA-binding</keyword>
<keyword id="KW-0699">rRNA-binding</keyword>
<feature type="chain" id="PRO_0000123274" description="Small ribosomal subunit protein uS11">
    <location>
        <begin position="1"/>
        <end position="124"/>
    </location>
</feature>
<feature type="region of interest" description="Disordered" evidence="2">
    <location>
        <begin position="102"/>
        <end position="124"/>
    </location>
</feature>